<evidence type="ECO:0000255" key="1">
    <source>
        <dbReference type="HAMAP-Rule" id="MF_00633"/>
    </source>
</evidence>
<gene>
    <name evidence="1" type="primary">petB</name>
    <name type="ordered locus">OtCpg00120</name>
</gene>
<keyword id="KW-0150">Chloroplast</keyword>
<keyword id="KW-0249">Electron transport</keyword>
<keyword id="KW-0349">Heme</keyword>
<keyword id="KW-0408">Iron</keyword>
<keyword id="KW-0472">Membrane</keyword>
<keyword id="KW-0479">Metal-binding</keyword>
<keyword id="KW-0602">Photosynthesis</keyword>
<keyword id="KW-0934">Plastid</keyword>
<keyword id="KW-1185">Reference proteome</keyword>
<keyword id="KW-0793">Thylakoid</keyword>
<keyword id="KW-0812">Transmembrane</keyword>
<keyword id="KW-1133">Transmembrane helix</keyword>
<keyword id="KW-0813">Transport</keyword>
<organism>
    <name type="scientific">Ostreococcus tauri</name>
    <dbReference type="NCBI Taxonomy" id="70448"/>
    <lineage>
        <taxon>Eukaryota</taxon>
        <taxon>Viridiplantae</taxon>
        <taxon>Chlorophyta</taxon>
        <taxon>Mamiellophyceae</taxon>
        <taxon>Mamiellales</taxon>
        <taxon>Bathycoccaceae</taxon>
        <taxon>Ostreococcus</taxon>
    </lineage>
</organism>
<comment type="function">
    <text evidence="1">Component of the cytochrome b6-f complex, which mediates electron transfer between photosystem II (PSII) and photosystem I (PSI), cyclic electron flow around PSI, and state transitions.</text>
</comment>
<comment type="cofactor">
    <cofactor evidence="1">
        <name>heme b</name>
        <dbReference type="ChEBI" id="CHEBI:60344"/>
    </cofactor>
    <text evidence="1">Binds 2 heme b groups non-covalently with two histidine residues as axial ligands.</text>
</comment>
<comment type="cofactor">
    <cofactor evidence="1">
        <name>heme c</name>
        <dbReference type="ChEBI" id="CHEBI:61717"/>
    </cofactor>
    <text evidence="1">Binds one heme group covalently by a single cysteine link with no axial amino acid ligand. This heme was named heme ci.</text>
</comment>
<comment type="subunit">
    <text evidence="1">The 4 large subunits of the cytochrome b6-f complex are cytochrome b6, subunit IV (17 kDa polypeptide, PetD), cytochrome f and the Rieske protein, while the 4 small subunits are PetG, PetL, PetM and PetN. The complex functions as a dimer.</text>
</comment>
<comment type="subcellular location">
    <subcellularLocation>
        <location evidence="1">Plastid</location>
        <location evidence="1">Chloroplast thylakoid membrane</location>
        <topology evidence="1">Multi-pass membrane protein</topology>
    </subcellularLocation>
</comment>
<comment type="miscellaneous">
    <text evidence="1">Heme 1 (or BH or b566) is high-potential and absorbs at about 566 nm, and heme 2 (or BL or b562) is low-potential and absorbs at about 562 nm.</text>
</comment>
<comment type="similarity">
    <text evidence="1">Belongs to the cytochrome b family. PetB subfamily.</text>
</comment>
<protein>
    <recommendedName>
        <fullName evidence="1">Cytochrome b6</fullName>
    </recommendedName>
</protein>
<geneLocation type="chloroplast"/>
<reference key="1">
    <citation type="journal article" date="2007" name="Mol. Biol. Evol.">
        <title>The complete chloroplast and mitochondrial DNA sequence of Ostreococcus tauri: organelle genomes of the smallest eukaryote are examples of compaction.</title>
        <authorList>
            <person name="Robbens S."/>
            <person name="Derelle E."/>
            <person name="Ferraz C."/>
            <person name="Wuyts J."/>
            <person name="Moreau H."/>
            <person name="Van de Peer Y."/>
        </authorList>
    </citation>
    <scope>NUCLEOTIDE SEQUENCE [LARGE SCALE GENOMIC DNA]</scope>
    <source>
        <strain>OTTH0595</strain>
    </source>
</reference>
<proteinExistence type="inferred from homology"/>
<feature type="chain" id="PRO_0000275327" description="Cytochrome b6">
    <location>
        <begin position="1"/>
        <end position="215"/>
    </location>
</feature>
<feature type="transmembrane region" description="Helical" evidence="1">
    <location>
        <begin position="32"/>
        <end position="52"/>
    </location>
</feature>
<feature type="transmembrane region" description="Helical" evidence="1">
    <location>
        <begin position="90"/>
        <end position="110"/>
    </location>
</feature>
<feature type="transmembrane region" description="Helical" evidence="1">
    <location>
        <begin position="116"/>
        <end position="136"/>
    </location>
</feature>
<feature type="transmembrane region" description="Helical" evidence="1">
    <location>
        <begin position="186"/>
        <end position="206"/>
    </location>
</feature>
<feature type="binding site" description="covalent" evidence="1">
    <location>
        <position position="35"/>
    </location>
    <ligand>
        <name>heme c</name>
        <dbReference type="ChEBI" id="CHEBI:61717"/>
    </ligand>
</feature>
<feature type="binding site" description="axial binding residue" evidence="1">
    <location>
        <position position="86"/>
    </location>
    <ligand>
        <name>heme b</name>
        <dbReference type="ChEBI" id="CHEBI:60344"/>
        <label>2</label>
    </ligand>
    <ligandPart>
        <name>Fe</name>
        <dbReference type="ChEBI" id="CHEBI:18248"/>
    </ligandPart>
</feature>
<feature type="binding site" description="axial binding residue" evidence="1">
    <location>
        <position position="100"/>
    </location>
    <ligand>
        <name>heme b</name>
        <dbReference type="ChEBI" id="CHEBI:60344"/>
        <label>1</label>
    </ligand>
    <ligandPart>
        <name>Fe</name>
        <dbReference type="ChEBI" id="CHEBI:18248"/>
    </ligandPart>
</feature>
<feature type="binding site" description="axial binding residue" evidence="1">
    <location>
        <position position="187"/>
    </location>
    <ligand>
        <name>heme b</name>
        <dbReference type="ChEBI" id="CHEBI:60344"/>
        <label>2</label>
    </ligand>
    <ligandPart>
        <name>Fe</name>
        <dbReference type="ChEBI" id="CHEBI:18248"/>
    </ligandPart>
</feature>
<feature type="binding site" description="axial binding residue" evidence="1">
    <location>
        <position position="202"/>
    </location>
    <ligand>
        <name>heme b</name>
        <dbReference type="ChEBI" id="CHEBI:60344"/>
        <label>1</label>
    </ligand>
    <ligandPart>
        <name>Fe</name>
        <dbReference type="ChEBI" id="CHEBI:18248"/>
    </ligandPart>
</feature>
<sequence length="215" mass="24209">MSKVYNWFNERLEIQSIADDVTSKYVPPHVNIFYCLGGITLTCFLVQVATGFAMTFYYRPTVTEAFASVQYIMTEVNFGWLIRSVHRWSASMMVLMMILHVFRVYLTGGFKKPRELTWVTGVILSVITVSFGVTGYSLPWDQVGYWAVKIVTGVPDAIPVIGGFVVELLRGSVGVGQPTLTRFYSLHTFVLPLLAAVFMLMHFLMIRKQGISGPL</sequence>
<dbReference type="EMBL" id="CR954199">
    <property type="protein sequence ID" value="CAL36337.1"/>
    <property type="molecule type" value="Genomic_DNA"/>
</dbReference>
<dbReference type="RefSeq" id="YP_717215.1">
    <property type="nucleotide sequence ID" value="NC_008289.1"/>
</dbReference>
<dbReference type="SMR" id="Q0P3P0"/>
<dbReference type="FunCoup" id="Q0P3P0">
    <property type="interactions" value="217"/>
</dbReference>
<dbReference type="STRING" id="70448.Q0P3P0"/>
<dbReference type="GeneID" id="4238838"/>
<dbReference type="KEGG" id="ota:OstapCp12"/>
<dbReference type="eggNOG" id="KOG4663">
    <property type="taxonomic scope" value="Eukaryota"/>
</dbReference>
<dbReference type="InParanoid" id="Q0P3P0"/>
<dbReference type="Proteomes" id="UP000009170">
    <property type="component" value="Chloroplast"/>
</dbReference>
<dbReference type="GO" id="GO:0009535">
    <property type="term" value="C:chloroplast thylakoid membrane"/>
    <property type="evidence" value="ECO:0007669"/>
    <property type="project" value="UniProtKB-SubCell"/>
</dbReference>
<dbReference type="GO" id="GO:0045158">
    <property type="term" value="F:electron transporter, transferring electrons within cytochrome b6/f complex of photosystem II activity"/>
    <property type="evidence" value="ECO:0007669"/>
    <property type="project" value="UniProtKB-UniRule"/>
</dbReference>
<dbReference type="GO" id="GO:0046872">
    <property type="term" value="F:metal ion binding"/>
    <property type="evidence" value="ECO:0007669"/>
    <property type="project" value="UniProtKB-KW"/>
</dbReference>
<dbReference type="GO" id="GO:0016491">
    <property type="term" value="F:oxidoreductase activity"/>
    <property type="evidence" value="ECO:0007669"/>
    <property type="project" value="InterPro"/>
</dbReference>
<dbReference type="GO" id="GO:0015979">
    <property type="term" value="P:photosynthesis"/>
    <property type="evidence" value="ECO:0007669"/>
    <property type="project" value="UniProtKB-UniRule"/>
</dbReference>
<dbReference type="GO" id="GO:0022904">
    <property type="term" value="P:respiratory electron transport chain"/>
    <property type="evidence" value="ECO:0007669"/>
    <property type="project" value="InterPro"/>
</dbReference>
<dbReference type="CDD" id="cd00284">
    <property type="entry name" value="Cytochrome_b_N"/>
    <property type="match status" value="1"/>
</dbReference>
<dbReference type="FunFam" id="1.20.810.10:FF:000001">
    <property type="entry name" value="Cytochrome b6"/>
    <property type="match status" value="1"/>
</dbReference>
<dbReference type="Gene3D" id="1.20.810.10">
    <property type="entry name" value="Cytochrome Bc1 Complex, Chain C"/>
    <property type="match status" value="1"/>
</dbReference>
<dbReference type="HAMAP" id="MF_00633">
    <property type="entry name" value="Cytb6_f_cytb6"/>
    <property type="match status" value="1"/>
</dbReference>
<dbReference type="InterPro" id="IPR005797">
    <property type="entry name" value="Cyt_b/b6_N"/>
</dbReference>
<dbReference type="InterPro" id="IPR023530">
    <property type="entry name" value="Cyt_B6_PetB"/>
</dbReference>
<dbReference type="InterPro" id="IPR027387">
    <property type="entry name" value="Cytb/b6-like_sf"/>
</dbReference>
<dbReference type="InterPro" id="IPR048259">
    <property type="entry name" value="Cytochrome_b_N_euk/bac"/>
</dbReference>
<dbReference type="InterPro" id="IPR016174">
    <property type="entry name" value="Di-haem_cyt_TM"/>
</dbReference>
<dbReference type="NCBIfam" id="NF002990">
    <property type="entry name" value="PRK03735.1"/>
    <property type="match status" value="1"/>
</dbReference>
<dbReference type="PANTHER" id="PTHR19271">
    <property type="entry name" value="CYTOCHROME B"/>
    <property type="match status" value="1"/>
</dbReference>
<dbReference type="PANTHER" id="PTHR19271:SF16">
    <property type="entry name" value="CYTOCHROME B"/>
    <property type="match status" value="1"/>
</dbReference>
<dbReference type="Pfam" id="PF00033">
    <property type="entry name" value="Cytochrome_B"/>
    <property type="match status" value="1"/>
</dbReference>
<dbReference type="PIRSF" id="PIRSF000032">
    <property type="entry name" value="Cytochrome_b6"/>
    <property type="match status" value="1"/>
</dbReference>
<dbReference type="SUPFAM" id="SSF81342">
    <property type="entry name" value="Transmembrane di-heme cytochromes"/>
    <property type="match status" value="1"/>
</dbReference>
<dbReference type="PROSITE" id="PS51002">
    <property type="entry name" value="CYTB_NTER"/>
    <property type="match status" value="1"/>
</dbReference>
<accession>Q0P3P0</accession>
<name>CYB6_OSTTA</name>